<name>EMC7_DANRE</name>
<comment type="function">
    <text evidence="1">Part of the endoplasmic reticulum membrane protein complex (EMC) that enables the energy-independent insertion into endoplasmic reticulum membranes of newly synthesized membrane proteins. Preferentially accommodates proteins with transmembrane domains that are weakly hydrophobic or contain destabilizing features such as charged and aromatic residues. Involved in the cotranslational insertion of multi-pass membrane proteins in which stop-transfer membrane-anchor sequences become ER membrane spanning helices. It is also required for the post-translational insertion of tail-anchored/TA proteins in endoplasmic reticulum membranes. By mediating the proper cotranslational insertion of N-terminal transmembrane domains in an N-exo topology, with translocated N-terminus in the lumen of the ER, controls the topology of multi-pass membrane proteins like the G protein-coupled receptors. By regulating the insertion of various proteins in membranes, it is indirectly involved in many cellular processes.</text>
</comment>
<comment type="subunit">
    <text evidence="1">Component of the ER membrane protein complex (EMC).</text>
</comment>
<comment type="subcellular location">
    <subcellularLocation>
        <location evidence="1">Endoplasmic reticulum membrane</location>
        <topology evidence="1">Single-pass type I membrane protein</topology>
    </subcellularLocation>
</comment>
<comment type="similarity">
    <text evidence="4">Belongs to the EMC7 family.</text>
</comment>
<organism>
    <name type="scientific">Danio rerio</name>
    <name type="common">Zebrafish</name>
    <name type="synonym">Brachydanio rerio</name>
    <dbReference type="NCBI Taxonomy" id="7955"/>
    <lineage>
        <taxon>Eukaryota</taxon>
        <taxon>Metazoa</taxon>
        <taxon>Chordata</taxon>
        <taxon>Craniata</taxon>
        <taxon>Vertebrata</taxon>
        <taxon>Euteleostomi</taxon>
        <taxon>Actinopterygii</taxon>
        <taxon>Neopterygii</taxon>
        <taxon>Teleostei</taxon>
        <taxon>Ostariophysi</taxon>
        <taxon>Cypriniformes</taxon>
        <taxon>Danionidae</taxon>
        <taxon>Danioninae</taxon>
        <taxon>Danio</taxon>
    </lineage>
</organism>
<proteinExistence type="evidence at transcript level"/>
<reference key="1">
    <citation type="journal article" date="2013" name="Nature">
        <title>The zebrafish reference genome sequence and its relationship to the human genome.</title>
        <authorList>
            <person name="Howe K."/>
            <person name="Clark M.D."/>
            <person name="Torroja C.F."/>
            <person name="Torrance J."/>
            <person name="Berthelot C."/>
            <person name="Muffato M."/>
            <person name="Collins J.E."/>
            <person name="Humphray S."/>
            <person name="McLaren K."/>
            <person name="Matthews L."/>
            <person name="McLaren S."/>
            <person name="Sealy I."/>
            <person name="Caccamo M."/>
            <person name="Churcher C."/>
            <person name="Scott C."/>
            <person name="Barrett J.C."/>
            <person name="Koch R."/>
            <person name="Rauch G.J."/>
            <person name="White S."/>
            <person name="Chow W."/>
            <person name="Kilian B."/>
            <person name="Quintais L.T."/>
            <person name="Guerra-Assuncao J.A."/>
            <person name="Zhou Y."/>
            <person name="Gu Y."/>
            <person name="Yen J."/>
            <person name="Vogel J.H."/>
            <person name="Eyre T."/>
            <person name="Redmond S."/>
            <person name="Banerjee R."/>
            <person name="Chi J."/>
            <person name="Fu B."/>
            <person name="Langley E."/>
            <person name="Maguire S.F."/>
            <person name="Laird G.K."/>
            <person name="Lloyd D."/>
            <person name="Kenyon E."/>
            <person name="Donaldson S."/>
            <person name="Sehra H."/>
            <person name="Almeida-King J."/>
            <person name="Loveland J."/>
            <person name="Trevanion S."/>
            <person name="Jones M."/>
            <person name="Quail M."/>
            <person name="Willey D."/>
            <person name="Hunt A."/>
            <person name="Burton J."/>
            <person name="Sims S."/>
            <person name="McLay K."/>
            <person name="Plumb B."/>
            <person name="Davis J."/>
            <person name="Clee C."/>
            <person name="Oliver K."/>
            <person name="Clark R."/>
            <person name="Riddle C."/>
            <person name="Elliot D."/>
            <person name="Threadgold G."/>
            <person name="Harden G."/>
            <person name="Ware D."/>
            <person name="Begum S."/>
            <person name="Mortimore B."/>
            <person name="Kerry G."/>
            <person name="Heath P."/>
            <person name="Phillimore B."/>
            <person name="Tracey A."/>
            <person name="Corby N."/>
            <person name="Dunn M."/>
            <person name="Johnson C."/>
            <person name="Wood J."/>
            <person name="Clark S."/>
            <person name="Pelan S."/>
            <person name="Griffiths G."/>
            <person name="Smith M."/>
            <person name="Glithero R."/>
            <person name="Howden P."/>
            <person name="Barker N."/>
            <person name="Lloyd C."/>
            <person name="Stevens C."/>
            <person name="Harley J."/>
            <person name="Holt K."/>
            <person name="Panagiotidis G."/>
            <person name="Lovell J."/>
            <person name="Beasley H."/>
            <person name="Henderson C."/>
            <person name="Gordon D."/>
            <person name="Auger K."/>
            <person name="Wright D."/>
            <person name="Collins J."/>
            <person name="Raisen C."/>
            <person name="Dyer L."/>
            <person name="Leung K."/>
            <person name="Robertson L."/>
            <person name="Ambridge K."/>
            <person name="Leongamornlert D."/>
            <person name="McGuire S."/>
            <person name="Gilderthorp R."/>
            <person name="Griffiths C."/>
            <person name="Manthravadi D."/>
            <person name="Nichol S."/>
            <person name="Barker G."/>
            <person name="Whitehead S."/>
            <person name="Kay M."/>
            <person name="Brown J."/>
            <person name="Murnane C."/>
            <person name="Gray E."/>
            <person name="Humphries M."/>
            <person name="Sycamore N."/>
            <person name="Barker D."/>
            <person name="Saunders D."/>
            <person name="Wallis J."/>
            <person name="Babbage A."/>
            <person name="Hammond S."/>
            <person name="Mashreghi-Mohammadi M."/>
            <person name="Barr L."/>
            <person name="Martin S."/>
            <person name="Wray P."/>
            <person name="Ellington A."/>
            <person name="Matthews N."/>
            <person name="Ellwood M."/>
            <person name="Woodmansey R."/>
            <person name="Clark G."/>
            <person name="Cooper J."/>
            <person name="Tromans A."/>
            <person name="Grafham D."/>
            <person name="Skuce C."/>
            <person name="Pandian R."/>
            <person name="Andrews R."/>
            <person name="Harrison E."/>
            <person name="Kimberley A."/>
            <person name="Garnett J."/>
            <person name="Fosker N."/>
            <person name="Hall R."/>
            <person name="Garner P."/>
            <person name="Kelly D."/>
            <person name="Bird C."/>
            <person name="Palmer S."/>
            <person name="Gehring I."/>
            <person name="Berger A."/>
            <person name="Dooley C.M."/>
            <person name="Ersan-Urun Z."/>
            <person name="Eser C."/>
            <person name="Geiger H."/>
            <person name="Geisler M."/>
            <person name="Karotki L."/>
            <person name="Kirn A."/>
            <person name="Konantz J."/>
            <person name="Konantz M."/>
            <person name="Oberlander M."/>
            <person name="Rudolph-Geiger S."/>
            <person name="Teucke M."/>
            <person name="Lanz C."/>
            <person name="Raddatz G."/>
            <person name="Osoegawa K."/>
            <person name="Zhu B."/>
            <person name="Rapp A."/>
            <person name="Widaa S."/>
            <person name="Langford C."/>
            <person name="Yang F."/>
            <person name="Schuster S.C."/>
            <person name="Carter N.P."/>
            <person name="Harrow J."/>
            <person name="Ning Z."/>
            <person name="Herrero J."/>
            <person name="Searle S.M."/>
            <person name="Enright A."/>
            <person name="Geisler R."/>
            <person name="Plasterk R.H."/>
            <person name="Lee C."/>
            <person name="Westerfield M."/>
            <person name="de Jong P.J."/>
            <person name="Zon L.I."/>
            <person name="Postlethwait J.H."/>
            <person name="Nusslein-Volhard C."/>
            <person name="Hubbard T.J."/>
            <person name="Roest Crollius H."/>
            <person name="Rogers J."/>
            <person name="Stemple D.L."/>
        </authorList>
    </citation>
    <scope>NUCLEOTIDE SEQUENCE [LARGE SCALE GENOMIC DNA]</scope>
    <source>
        <strain>Tuebingen</strain>
    </source>
</reference>
<reference key="2">
    <citation type="submission" date="2006-05" db="EMBL/GenBank/DDBJ databases">
        <authorList>
            <consortium name="NIH - Zebrafish Gene Collection (ZGC) project"/>
        </authorList>
    </citation>
    <scope>NUCLEOTIDE SEQUENCE [LARGE SCALE MRNA]</scope>
    <source>
        <tissue>Larva</tissue>
    </source>
</reference>
<evidence type="ECO:0000250" key="1">
    <source>
        <dbReference type="UniProtKB" id="Q9NPA0"/>
    </source>
</evidence>
<evidence type="ECO:0000255" key="2"/>
<evidence type="ECO:0000256" key="3">
    <source>
        <dbReference type="SAM" id="MobiDB-lite"/>
    </source>
</evidence>
<evidence type="ECO:0000305" key="4"/>
<sequence length="237" mass="26560">MPHIKRLLDVYIALQALFALSWGFSDPEPGPVAASQSNGDRFKIEGRAIVPGVKTQDWISTARVLVEGEEYVGFLKTDGSFAVNDVPSGSYVVEIVSPSFRFEPVRVDITSKGKMRARLVNYIKTSEVIRQPYPLQIRAGGPHTYFMKRETWGWTDFLMNPMVMMMVLPLLIIVLLPKVVNTNDPEMRKEMEQSMNMLNPNPELPDVSEFMTKLFSKGSSKSGGGNKGSRSVATKRR</sequence>
<gene>
    <name type="primary">emc7</name>
    <name type="ORF">si:ch211-150c22.3</name>
</gene>
<accession>Q5TYV0</accession>
<keyword id="KW-0256">Endoplasmic reticulum</keyword>
<keyword id="KW-0472">Membrane</keyword>
<keyword id="KW-1185">Reference proteome</keyword>
<keyword id="KW-0732">Signal</keyword>
<keyword id="KW-0812">Transmembrane</keyword>
<keyword id="KW-1133">Transmembrane helix</keyword>
<protein>
    <recommendedName>
        <fullName>Endoplasmic reticulum membrane protein complex subunit 7</fullName>
    </recommendedName>
    <alternativeName>
        <fullName>ER membrane protein complex subunit 7</fullName>
    </alternativeName>
</protein>
<feature type="signal peptide" evidence="2">
    <location>
        <begin position="1"/>
        <end position="23"/>
    </location>
</feature>
<feature type="chain" id="PRO_0000300094" description="Endoplasmic reticulum membrane protein complex subunit 7">
    <location>
        <begin position="24"/>
        <end position="237"/>
    </location>
</feature>
<feature type="topological domain" description="Lumenal" evidence="1">
    <location>
        <begin position="24"/>
        <end position="156"/>
    </location>
</feature>
<feature type="transmembrane region" description="Helical" evidence="2">
    <location>
        <begin position="157"/>
        <end position="177"/>
    </location>
</feature>
<feature type="topological domain" description="Cytoplasmic" evidence="1">
    <location>
        <begin position="178"/>
        <end position="237"/>
    </location>
</feature>
<feature type="region of interest" description="Disordered" evidence="3">
    <location>
        <begin position="215"/>
        <end position="237"/>
    </location>
</feature>
<dbReference type="EMBL" id="BX784394">
    <property type="protein sequence ID" value="CAH68880.1"/>
    <property type="molecule type" value="Genomic_DNA"/>
</dbReference>
<dbReference type="EMBL" id="BC116477">
    <property type="protein sequence ID" value="AAI16478.1"/>
    <property type="molecule type" value="mRNA"/>
</dbReference>
<dbReference type="RefSeq" id="NP_001020686.1">
    <property type="nucleotide sequence ID" value="NM_001025515.2"/>
</dbReference>
<dbReference type="SMR" id="Q5TYV0"/>
<dbReference type="BioGRID" id="287692">
    <property type="interactions" value="1"/>
</dbReference>
<dbReference type="FunCoup" id="Q5TYV0">
    <property type="interactions" value="2292"/>
</dbReference>
<dbReference type="STRING" id="7955.ENSDARP00000024849"/>
<dbReference type="PaxDb" id="7955-ENSDARP00000104784"/>
<dbReference type="PeptideAtlas" id="Q5TYV0"/>
<dbReference type="Ensembl" id="ENSDART00000024528">
    <property type="protein sequence ID" value="ENSDARP00000024849"/>
    <property type="gene ID" value="ENSDARG00000012144"/>
</dbReference>
<dbReference type="GeneID" id="561549"/>
<dbReference type="KEGG" id="dre:561549"/>
<dbReference type="AGR" id="ZFIN:ZDB-GENE-041001-170"/>
<dbReference type="CTD" id="561549"/>
<dbReference type="ZFIN" id="ZDB-GENE-041001-170">
    <property type="gene designation" value="emc7b"/>
</dbReference>
<dbReference type="eggNOG" id="KOG3306">
    <property type="taxonomic scope" value="Eukaryota"/>
</dbReference>
<dbReference type="HOGENOM" id="CLU_073620_1_1_1"/>
<dbReference type="InParanoid" id="Q5TYV0"/>
<dbReference type="OMA" id="EMENMQM"/>
<dbReference type="OrthoDB" id="27095at2759"/>
<dbReference type="PhylomeDB" id="Q5TYV0"/>
<dbReference type="TreeFam" id="TF106158"/>
<dbReference type="PRO" id="PR:Q5TYV0"/>
<dbReference type="Proteomes" id="UP000000437">
    <property type="component" value="Chromosome 20"/>
</dbReference>
<dbReference type="Bgee" id="ENSDARG00000012144">
    <property type="expression patterns" value="Expressed in somite and 27 other cell types or tissues"/>
</dbReference>
<dbReference type="GO" id="GO:0072546">
    <property type="term" value="C:EMC complex"/>
    <property type="evidence" value="ECO:0000250"/>
    <property type="project" value="UniProtKB"/>
</dbReference>
<dbReference type="GO" id="GO:0005789">
    <property type="term" value="C:endoplasmic reticulum membrane"/>
    <property type="evidence" value="ECO:0000250"/>
    <property type="project" value="UniProtKB"/>
</dbReference>
<dbReference type="GO" id="GO:0016020">
    <property type="term" value="C:membrane"/>
    <property type="evidence" value="ECO:0000250"/>
    <property type="project" value="UniProtKB"/>
</dbReference>
<dbReference type="GO" id="GO:0030246">
    <property type="term" value="F:carbohydrate binding"/>
    <property type="evidence" value="ECO:0007669"/>
    <property type="project" value="InterPro"/>
</dbReference>
<dbReference type="GO" id="GO:0045050">
    <property type="term" value="P:protein insertion into ER membrane by stop-transfer membrane-anchor sequence"/>
    <property type="evidence" value="ECO:0000250"/>
    <property type="project" value="UniProtKB"/>
</dbReference>
<dbReference type="GO" id="GO:0071816">
    <property type="term" value="P:tail-anchored membrane protein insertion into ER membrane"/>
    <property type="evidence" value="ECO:0000250"/>
    <property type="project" value="UniProtKB"/>
</dbReference>
<dbReference type="InterPro" id="IPR013784">
    <property type="entry name" value="Carb-bd-like_fold"/>
</dbReference>
<dbReference type="InterPro" id="IPR039163">
    <property type="entry name" value="EMC7"/>
</dbReference>
<dbReference type="InterPro" id="IPR019008">
    <property type="entry name" value="EMC7_beta_sandwich"/>
</dbReference>
<dbReference type="PANTHER" id="PTHR13605">
    <property type="entry name" value="ER MEMBRANE PROTEIN COMPLEX SUBUNIT 7"/>
    <property type="match status" value="1"/>
</dbReference>
<dbReference type="PANTHER" id="PTHR13605:SF4">
    <property type="entry name" value="ER MEMBRANE PROTEIN COMPLEX SUBUNIT 7"/>
    <property type="match status" value="1"/>
</dbReference>
<dbReference type="Pfam" id="PF09430">
    <property type="entry name" value="EMC7_beta-sandw"/>
    <property type="match status" value="1"/>
</dbReference>
<dbReference type="SUPFAM" id="SSF49452">
    <property type="entry name" value="Starch-binding domain-like"/>
    <property type="match status" value="1"/>
</dbReference>